<feature type="signal peptide" evidence="1 4 6">
    <location>
        <begin position="1"/>
        <end position="20"/>
    </location>
</feature>
<feature type="chain" id="PRO_5011088933" description="Ice-binding protein" evidence="1">
    <location>
        <begin position="21"/>
        <end position="261"/>
    </location>
</feature>
<feature type="site" description="Ice-binding" evidence="12">
    <location>
        <position position="65"/>
    </location>
</feature>
<feature type="site" description="Ice-binding" evidence="12">
    <location>
        <position position="147"/>
    </location>
</feature>
<feature type="site" description="Ice-binding" evidence="12">
    <location>
        <position position="234"/>
    </location>
</feature>
<feature type="glycosylation site" description="N-linked (GlcNAc...) asparagine" evidence="3 15">
    <location>
        <position position="185"/>
    </location>
</feature>
<feature type="mutagenesis site" description="Has 35% thermal hysteresis (TH) activity of that of the wild-type." evidence="3">
    <original>S</original>
    <variation>Y</variation>
    <location>
        <position position="43"/>
    </location>
</feature>
<feature type="mutagenesis site" description="Has 89% thermal hysteresis (TH) activity of that of the wild-type." evidence="3">
    <original>A</original>
    <variation>Y</variation>
    <location>
        <position position="49"/>
    </location>
</feature>
<feature type="mutagenesis site" description="Has 28% thermal hysteresis (TH) activity of that of the wild-type." evidence="3">
    <original>T</original>
    <variation>Y</variation>
    <location>
        <position position="65"/>
    </location>
</feature>
<feature type="mutagenesis site" description="Has 92% thermal hysteresis (TH) activity of that of the wild-type." evidence="3">
    <original>T</original>
    <variation>Y</variation>
    <location>
        <position position="109"/>
    </location>
</feature>
<feature type="mutagenesis site" description="Has 62% thermal hysteresis (TH) activity of that of the wild-type. Loss of TH activity; when associated with Y-234." evidence="3">
    <original>S</original>
    <variation>Y</variation>
    <location>
        <position position="147"/>
    </location>
</feature>
<feature type="mutagenesis site" description="Has 67% thermal hysteresis (TH) activity of that of the wild-type." evidence="3">
    <original>S</original>
    <variation>Y</variation>
    <location>
        <position position="171"/>
    </location>
</feature>
<feature type="mutagenesis site" description="Has 50% thermal hysteresis (TH) activity of that of the wild-type." evidence="3">
    <original>T</original>
    <variation>Y</variation>
    <location>
        <position position="198"/>
    </location>
</feature>
<feature type="mutagenesis site" description="Has 59% thermal hysteresis (TH) activity of that of the wild-type." evidence="3">
    <original>T</original>
    <variation>Y</variation>
    <location>
        <position position="216"/>
    </location>
</feature>
<feature type="mutagenesis site" description="Has 64% thermal hysteresis (TH) activity of that of the wild-type." evidence="3">
    <original>S</original>
    <variation>Y</variation>
    <location>
        <position position="222"/>
    </location>
</feature>
<feature type="mutagenesis site" description="Has 47% thermal hysteresis (TH) activity of that of the wild-type. Loss of TH activity; when associated with Y-147." evidence="3">
    <original>A</original>
    <variation>Y</variation>
    <location>
        <position position="234"/>
    </location>
</feature>
<feature type="mutagenesis site" description="No effect on thermal hysteresis (TH) activity." evidence="3">
    <original>T</original>
    <variation>Y</variation>
    <location>
        <position position="239"/>
    </location>
</feature>
<feature type="mutagenesis site" description="Has 13% higher thermal hysteresis (TH) activity compared to the wild-type. Loss of homodimerization." evidence="3">
    <location>
        <begin position="244"/>
        <end position="261"/>
    </location>
</feature>
<feature type="helix" evidence="16">
    <location>
        <begin position="29"/>
        <end position="33"/>
    </location>
</feature>
<feature type="strand" evidence="16">
    <location>
        <begin position="35"/>
        <end position="46"/>
    </location>
</feature>
<feature type="strand" evidence="16">
    <location>
        <begin position="49"/>
        <end position="52"/>
    </location>
</feature>
<feature type="strand" evidence="16">
    <location>
        <begin position="54"/>
        <end position="59"/>
    </location>
</feature>
<feature type="helix" evidence="16">
    <location>
        <begin position="61"/>
        <end position="63"/>
    </location>
</feature>
<feature type="strand" evidence="16">
    <location>
        <begin position="64"/>
        <end position="67"/>
    </location>
</feature>
<feature type="strand" evidence="16">
    <location>
        <begin position="83"/>
        <end position="85"/>
    </location>
</feature>
<feature type="strand" evidence="16">
    <location>
        <begin position="87"/>
        <end position="89"/>
    </location>
</feature>
<feature type="helix" evidence="16">
    <location>
        <begin position="96"/>
        <end position="116"/>
    </location>
</feature>
<feature type="strand" evidence="16">
    <location>
        <begin position="121"/>
        <end position="124"/>
    </location>
</feature>
<feature type="helix" evidence="16">
    <location>
        <begin position="125"/>
        <end position="128"/>
    </location>
</feature>
<feature type="strand" evidence="16">
    <location>
        <begin position="132"/>
        <end position="135"/>
    </location>
</feature>
<feature type="strand" evidence="16">
    <location>
        <begin position="137"/>
        <end position="144"/>
    </location>
</feature>
<feature type="strand" evidence="16">
    <location>
        <begin position="146"/>
        <end position="148"/>
    </location>
</feature>
<feature type="strand" evidence="16">
    <location>
        <begin position="152"/>
        <end position="155"/>
    </location>
</feature>
<feature type="strand" evidence="16">
    <location>
        <begin position="162"/>
        <end position="168"/>
    </location>
</feature>
<feature type="strand" evidence="16">
    <location>
        <begin position="170"/>
        <end position="172"/>
    </location>
</feature>
<feature type="strand" evidence="16">
    <location>
        <begin position="177"/>
        <end position="181"/>
    </location>
</feature>
<feature type="helix" evidence="16">
    <location>
        <begin position="186"/>
        <end position="188"/>
    </location>
</feature>
<feature type="strand" evidence="16">
    <location>
        <begin position="189"/>
        <end position="195"/>
    </location>
</feature>
<feature type="strand" evidence="16">
    <location>
        <begin position="197"/>
        <end position="199"/>
    </location>
</feature>
<feature type="strand" evidence="16">
    <location>
        <begin position="204"/>
        <end position="213"/>
    </location>
</feature>
<feature type="strand" evidence="16">
    <location>
        <begin position="215"/>
        <end position="217"/>
    </location>
</feature>
<feature type="strand" evidence="16">
    <location>
        <begin position="222"/>
        <end position="237"/>
    </location>
</feature>
<feature type="strand" evidence="16">
    <location>
        <begin position="239"/>
        <end position="241"/>
    </location>
</feature>
<keyword id="KW-0002">3D-structure</keyword>
<keyword id="KW-0047">Antifreeze protein</keyword>
<keyword id="KW-0903">Direct protein sequencing</keyword>
<keyword id="KW-0325">Glycoprotein</keyword>
<keyword id="KW-0964">Secreted</keyword>
<keyword id="KW-0732">Signal</keyword>
<keyword id="KW-0346">Stress response</keyword>
<gene>
    <name evidence="13" type="primary">AFP</name>
</gene>
<sequence length="261" mass="26807">MSLLSIITIGLAGLGGLVNGQRDLSVELGVASNFAILAKAGISSVPDSAILGDIGVSPAAATYITGFGLTQDSSTTYATSPQVTGLIYAADYSTPTPNYLAAAVANAETAYNQAAGFVDPDFLELGAGELRDQTLVPGLYKWTSSVSVPTDLTFEGNGDATWVFQIAGGLSLADGVAFTLAGGANSTNIAFQVGDDVTVGKGAHFEGVLLAKRFVTLQTGSSLNGRVLSQTEVALQKATVNSPFVPAPEVVQKRSNARQWL</sequence>
<name>IBP_LEUSY</name>
<reference evidence="13" key="1">
    <citation type="submission" date="2009-06" db="EMBL/GenBank/DDBJ databases">
        <title>Gene cloning of antifreeze protein (AFP) of Leucosporidium sp. AY30.</title>
        <authorList>
            <person name="Lee J.K."/>
            <person name="Kang S.H."/>
            <person name="Kim H.J."/>
        </authorList>
    </citation>
    <scope>NUCLEOTIDE SEQUENCE [GENOMIC DNA]</scope>
    <source>
        <strain evidence="13">AY30</strain>
    </source>
</reference>
<reference key="2">
    <citation type="journal article" date="2010" name="Cryobiology">
        <title>An extracellular ice-binding glycoprotein from an Arctic psychrophilic yeast.</title>
        <authorList>
            <person name="Lee J.K."/>
            <person name="Park K.S."/>
            <person name="Park S."/>
            <person name="Park H."/>
            <person name="Song Y.H."/>
            <person name="Kang S.H."/>
            <person name="Kim H.J."/>
        </authorList>
    </citation>
    <scope>NUCLEOTIDE SEQUENCE [MRNA]</scope>
    <scope>PROTEIN SEQUENCE OF 214-226</scope>
    <scope>IDENTIFICATION BY MASS SPECTROMETRY</scope>
    <scope>FUNCTION</scope>
    <scope>SUBCELLULAR LOCATION</scope>
    <scope>GLYCOSYLATION</scope>
</reference>
<reference key="3">
    <citation type="journal article" date="2012" name="Cryobiology">
        <title>Characterization of the ice-binding protein from Arctic yeast Leucosporidium sp. AY30.</title>
        <authorList>
            <person name="Park K.S."/>
            <person name="Do H."/>
            <person name="Lee J.H."/>
            <person name="Park S.I."/>
            <person name="Kim E."/>
            <person name="Kim S.J."/>
            <person name="Kang S.H."/>
            <person name="Kim H.J."/>
        </authorList>
    </citation>
    <scope>PROTEIN SEQUENCE OF 21-29</scope>
    <scope>FUNCTION</scope>
    <scope>SUBUNIT</scope>
    <scope>SUBCELLULAR LOCATION</scope>
    <scope>GLYCOSYLATION</scope>
    <scope>SIGNAL SEQUENCE</scope>
    <scope>CIRCULAR DICHROISM ANALYSIS</scope>
</reference>
<reference key="4">
    <citation type="journal article" date="2013" name="Appl. Microbiol. Biotechnol.">
        <title>Optimization of the pilot-scale production of an ice-binding protein by fed-batch culture of Pichia pastoris.</title>
        <authorList>
            <person name="Lee J.H."/>
            <person name="Lee S.G."/>
            <person name="Do H."/>
            <person name="Park J.C."/>
            <person name="Kim E."/>
            <person name="Choe Y.H."/>
            <person name="Han S.J."/>
            <person name="Kim H.J."/>
        </authorList>
    </citation>
    <scope>PROTEIN SEQUENCE OF 21-25</scope>
    <scope>FUNCTION</scope>
    <scope>SUBCELLULAR LOCATION</scope>
    <scope>GLYCOSYLATION</scope>
    <scope>MASS SPECTROMETRY</scope>
    <scope>CIRCULAR DICHROISM ANALYSIS</scope>
</reference>
<reference key="5">
    <citation type="journal article" date="2011" name="Acta Crystallogr. F">
        <title>Crystallization and preliminary X-ray crystallographic studies of the ice-binding protein from the Arctic [correction of Aantarctic] yeast Leucosporidium sp. AY30.</title>
        <authorList>
            <person name="Park A.K."/>
            <person name="Park K.S."/>
            <person name="Kim H.J."/>
            <person name="Park H."/>
            <person name="Ahn I.Y."/>
            <person name="Chi Y.M."/>
            <person name="Moon J.H."/>
        </authorList>
    </citation>
    <scope>CRYSTALLIZATION</scope>
</reference>
<reference key="6">
    <citation type="journal article" date="2012" name="Appl. Biochem. Biotechnol.">
        <title>Cryopreservative effects of the recombinant ice-binding protein from the arctic yeast Leucosporidium sp. on red blood cells.</title>
        <authorList>
            <person name="Lee S.G."/>
            <person name="Koh H.Y."/>
            <person name="Lee J.H."/>
            <person name="Kang S.H."/>
            <person name="Kim H.J."/>
        </authorList>
    </citation>
    <scope>FUNCTION</scope>
    <scope>BIOTECHNOLOGY</scope>
</reference>
<reference evidence="14 15" key="7">
    <citation type="journal article" date="2012" name="J. Biol. Chem.">
        <title>Structural basis for antifreeze activity of ice-binding protein from arctic yeast.</title>
        <authorList>
            <person name="Lee J.H."/>
            <person name="Park A.K."/>
            <person name="Do H."/>
            <person name="Park K.S."/>
            <person name="Moh S.H."/>
            <person name="Chi Y.M."/>
            <person name="Kim H.J."/>
        </authorList>
    </citation>
    <scope>X-RAY CRYSTALLOGRAPHY (1.57 ANGSTROMS) OF 21-261 OF NON-GLYCOSYLATED AND GLYCOSYLATED PROTEINS</scope>
    <scope>FUNCTION</scope>
    <scope>SUBUNIT</scope>
    <scope>GLYCOSYLATION AT ASN-185</scope>
    <scope>MUTAGENESIS OF SER-43; ALA-49; THR-65; THR-109; SER-147; SER-171; THR-198; THR-216; SER-222; ALA-234; THR-239 AND 244-PHE--LEU-261</scope>
    <scope>CIRCULAR DICHROISM ANALYSIS</scope>
    <source>
        <strain evidence="10">AY30</strain>
    </source>
</reference>
<reference key="8">
    <citation type="journal article" date="2014" name="Acta Crystallogr. D">
        <title>Structure-based characterization and antifreeze properties of a hyperactive ice-binding protein from the Antarctic bacterium Flavobacterium frigoris PS1.</title>
        <authorList>
            <person name="Do H."/>
            <person name="Kim S.J."/>
            <person name="Kim H.J."/>
            <person name="Lee J.H."/>
        </authorList>
    </citation>
    <scope>X-RAY CRYSTALLOGRAPHY (1.34 ANGSTROMS) OF 21-53; 52-97 AND 100-243 OF CHIMERA WITH BACTERIAL ANTIFREEZE PROTEIN</scope>
    <scope>FUNCTION</scope>
    <scope>SUBUNIT</scope>
    <scope>CIRCULAR DICHROISM ANALYSIS</scope>
</reference>
<dbReference type="EMBL" id="GQ336994">
    <property type="protein sequence ID" value="ACU30806.1"/>
    <property type="molecule type" value="Genomic_DNA"/>
</dbReference>
<dbReference type="EMBL" id="GQ336995">
    <property type="protein sequence ID" value="ACU30807.1"/>
    <property type="molecule type" value="mRNA"/>
</dbReference>
<dbReference type="PDB" id="3UYU">
    <property type="method" value="X-ray"/>
    <property type="resolution" value="1.57 A"/>
    <property type="chains" value="A/B=21-261"/>
</dbReference>
<dbReference type="PDB" id="3UYV">
    <property type="method" value="X-ray"/>
    <property type="resolution" value="2.43 A"/>
    <property type="chains" value="A=21-261"/>
</dbReference>
<dbReference type="PDB" id="4NU3">
    <property type="method" value="X-ray"/>
    <property type="resolution" value="1.40 A"/>
    <property type="chains" value="A/B=52-97"/>
</dbReference>
<dbReference type="PDB" id="4NUH">
    <property type="method" value="X-ray"/>
    <property type="resolution" value="1.34 A"/>
    <property type="chains" value="A=21-53, A=100-243"/>
</dbReference>
<dbReference type="PDBsum" id="3UYU"/>
<dbReference type="PDBsum" id="3UYV"/>
<dbReference type="PDBsum" id="4NU3"/>
<dbReference type="PDBsum" id="4NUH"/>
<dbReference type="SMR" id="C7F6X3"/>
<dbReference type="GlyCosmos" id="C7F6X3">
    <property type="glycosylation" value="1 site, No reported glycans"/>
</dbReference>
<dbReference type="iPTMnet" id="C7F6X3"/>
<dbReference type="EvolutionaryTrace" id="C7F6X3"/>
<dbReference type="GO" id="GO:0005576">
    <property type="term" value="C:extracellular region"/>
    <property type="evidence" value="ECO:0007669"/>
    <property type="project" value="UniProtKB-SubCell"/>
</dbReference>
<dbReference type="GO" id="GO:0050825">
    <property type="term" value="F:ice binding"/>
    <property type="evidence" value="ECO:0000314"/>
    <property type="project" value="UniProtKB"/>
</dbReference>
<dbReference type="InterPro" id="IPR021884">
    <property type="entry name" value="Ice-bd_prot"/>
</dbReference>
<dbReference type="Pfam" id="PF11999">
    <property type="entry name" value="Ice_binding"/>
    <property type="match status" value="1"/>
</dbReference>
<organism>
    <name type="scientific">Leucosporidium sp. (strain AY30)</name>
    <name type="common">Arctic yeast</name>
    <dbReference type="NCBI Taxonomy" id="662878"/>
    <lineage>
        <taxon>Eukaryota</taxon>
        <taxon>Fungi</taxon>
        <taxon>Dikarya</taxon>
        <taxon>Basidiomycota</taxon>
        <taxon>Pucciniomycotina</taxon>
        <taxon>Microbotryomycetes</taxon>
        <taxon>Leucosporidiales</taxon>
        <taxon>Leucosporidium</taxon>
    </lineage>
</organism>
<proteinExistence type="evidence at protein level"/>
<comment type="function">
    <text evidence="2 3 4 5 6 7">Confers freeze tolerance. Binds to the surface of ice crystals and inhibits their growth. Has low thermal hysteresis (TH) activity, which is the ability to lower the freezing point of an aqueous solution below its melting point (PubMed:20067781, PubMed:22303017, PubMed:22426061, PubMed:22622645, PubMed:23203635, PubMed:24699650). The TH activity of this protein is approximately 0.2 degrees Celsius at 50 uM and 0.3 degrees Celsius at 400 uM (PubMed:24699650).</text>
</comment>
<comment type="subunit">
    <text evidence="3 4 7">Homodimer (PubMed:22303017, PubMed:22426061, PubMed:24699650). Dimerization is not required for the thermal hysteresis (TH) activity (PubMed:22303017).</text>
</comment>
<comment type="subcellular location">
    <subcellularLocation>
        <location evidence="2 4 6">Secreted</location>
    </subcellularLocation>
</comment>
<comment type="PTM">
    <text evidence="2 3 4 6 12">Glycosylated (PubMed:20067781, PubMed:22303017, PubMed:22426061, PubMed:23203635). Glycosylation is not required for the thermal hysteresis (TH) activity (PubMed:22426061). Glycosylation may increase stability and secretion of this protein (Probable).</text>
</comment>
<comment type="mass spectrometry" mass="25565.0" method="MALDI" evidence="6">
    <text>The measured mass is that of the mature protein.</text>
</comment>
<comment type="biotechnology">
    <text evidence="5">Improves cryopreservation of the human red blood cells (RBCs). Almost 90 % hemolysis damage induced to RBCs by freeze thawing with the slow warming at 22 degrees Celsius is dramatically decreased to less than 16 % when 0.4 or 0.8 mg/ml of this protein is used as a cryoprotectant. The post-thaw cell counts of RBCs frozen in the presence of 0.8 mg/ml of this protein and thawed by slow warming at 22 degrees Celsius is almost the same as that of non-frozen intact RBCs, whereas the recovery of RBCs frozen in its absence is less than 30 %.</text>
</comment>
<comment type="similarity">
    <text evidence="11">Belongs to the ice-binding protein family.</text>
</comment>
<comment type="online information" name="Protein Spotlight">
    <link uri="https://www.proteinspotlight.org/back_issues/209/"/>
    <text>Ice whisperer - Issue 209 of December 2018</text>
</comment>
<accession>C7F6X3</accession>
<evidence type="ECO:0000255" key="1"/>
<evidence type="ECO:0000269" key="2">
    <source>
    </source>
</evidence>
<evidence type="ECO:0000269" key="3">
    <source>
    </source>
</evidence>
<evidence type="ECO:0000269" key="4">
    <source>
    </source>
</evidence>
<evidence type="ECO:0000269" key="5">
    <source>
    </source>
</evidence>
<evidence type="ECO:0000269" key="6">
    <source>
    </source>
</evidence>
<evidence type="ECO:0000269" key="7">
    <source>
    </source>
</evidence>
<evidence type="ECO:0000303" key="8">
    <source>
    </source>
</evidence>
<evidence type="ECO:0000303" key="9">
    <source>
    </source>
</evidence>
<evidence type="ECO:0000303" key="10">
    <source>
    </source>
</evidence>
<evidence type="ECO:0000305" key="11"/>
<evidence type="ECO:0000305" key="12">
    <source>
    </source>
</evidence>
<evidence type="ECO:0000312" key="13">
    <source>
        <dbReference type="EMBL" id="ACU30806.1"/>
    </source>
</evidence>
<evidence type="ECO:0007744" key="14">
    <source>
        <dbReference type="PDB" id="3UYU"/>
    </source>
</evidence>
<evidence type="ECO:0007744" key="15">
    <source>
        <dbReference type="PDB" id="3UYV"/>
    </source>
</evidence>
<evidence type="ECO:0007829" key="16">
    <source>
        <dbReference type="PDB" id="3UYU"/>
    </source>
</evidence>
<protein>
    <recommendedName>
        <fullName evidence="8">Ice-binding protein</fullName>
    </recommendedName>
    <alternativeName>
        <fullName evidence="13">Antifreeze protein</fullName>
        <shortName evidence="11">AFP</shortName>
    </alternativeName>
    <alternativeName>
        <fullName evidence="9">LeIBP</fullName>
    </alternativeName>
</protein>